<sequence length="384" mass="43003">MPDTSAFSATTRPYFATVARGLEAIAAQELTELGAEQVKPEFAGVAFIGDRALLYRINLWSRLIYRVLMPMATVKAFNAQDLYRSIKKIDWDEYFSPEQTLQINCTGKNPQLNHSHFTALQVKNAIVDQQRDRYQRRSSVDLEQPDIVINAHIHQNHCQLSLDSTGFSLHRRGYRPALGNAPLKETLASALLTMAGWTPELPLYDPLCGSGTFLLEAGLQSLNIAPGKFQPGFCFQQWPDFDQDLWHSLLQTAKAGERDTLQAPLWGSDGDREVIQAAKSNAQQCQLGGKIHWQKLNFADIEPPAAEGVLICNPPYGKRIGQEEALGDFYQQIGDVLKQRFRGWTAFVFSGNKALTKRIGLRTSARFPVNNGGLPCTLLKYELY</sequence>
<accession>Q55156</accession>
<protein>
    <recommendedName>
        <fullName>Putative RNA methyltransferase slr0064</fullName>
        <ecNumber>2.1.1.-</ecNumber>
    </recommendedName>
</protein>
<organism>
    <name type="scientific">Synechocystis sp. (strain ATCC 27184 / PCC 6803 / Kazusa)</name>
    <dbReference type="NCBI Taxonomy" id="1111708"/>
    <lineage>
        <taxon>Bacteria</taxon>
        <taxon>Bacillati</taxon>
        <taxon>Cyanobacteriota</taxon>
        <taxon>Cyanophyceae</taxon>
        <taxon>Synechococcales</taxon>
        <taxon>Merismopediaceae</taxon>
        <taxon>Synechocystis</taxon>
    </lineage>
</organism>
<dbReference type="EC" id="2.1.1.-"/>
<dbReference type="EMBL" id="BA000022">
    <property type="protein sequence ID" value="BAA10293.1"/>
    <property type="molecule type" value="Genomic_DNA"/>
</dbReference>
<dbReference type="PIR" id="S74375">
    <property type="entry name" value="S74375"/>
</dbReference>
<dbReference type="SMR" id="Q55156"/>
<dbReference type="FunCoup" id="Q55156">
    <property type="interactions" value="205"/>
</dbReference>
<dbReference type="STRING" id="1148.gene:10499793"/>
<dbReference type="PaxDb" id="1148-1001151"/>
<dbReference type="EnsemblBacteria" id="BAA10293">
    <property type="protein sequence ID" value="BAA10293"/>
    <property type="gene ID" value="BAA10293"/>
</dbReference>
<dbReference type="KEGG" id="syn:slr0064"/>
<dbReference type="eggNOG" id="COG0116">
    <property type="taxonomic scope" value="Bacteria"/>
</dbReference>
<dbReference type="InParanoid" id="Q55156"/>
<dbReference type="PhylomeDB" id="Q55156"/>
<dbReference type="Proteomes" id="UP000001425">
    <property type="component" value="Chromosome"/>
</dbReference>
<dbReference type="GO" id="GO:0003723">
    <property type="term" value="F:RNA binding"/>
    <property type="evidence" value="ECO:0007669"/>
    <property type="project" value="InterPro"/>
</dbReference>
<dbReference type="GO" id="GO:0016423">
    <property type="term" value="F:tRNA (guanine) methyltransferase activity"/>
    <property type="evidence" value="ECO:0000318"/>
    <property type="project" value="GO_Central"/>
</dbReference>
<dbReference type="GO" id="GO:0030488">
    <property type="term" value="P:tRNA methylation"/>
    <property type="evidence" value="ECO:0000318"/>
    <property type="project" value="GO_Central"/>
</dbReference>
<dbReference type="CDD" id="cd11715">
    <property type="entry name" value="THUMP_AdoMetMT"/>
    <property type="match status" value="1"/>
</dbReference>
<dbReference type="Gene3D" id="3.30.2130.30">
    <property type="match status" value="1"/>
</dbReference>
<dbReference type="Gene3D" id="3.40.50.150">
    <property type="entry name" value="Vaccinia Virus protein VP39"/>
    <property type="match status" value="1"/>
</dbReference>
<dbReference type="InterPro" id="IPR002052">
    <property type="entry name" value="DNA_methylase_N6_adenine_CS"/>
</dbReference>
<dbReference type="InterPro" id="IPR000241">
    <property type="entry name" value="RlmKL-like_Mtase"/>
</dbReference>
<dbReference type="InterPro" id="IPR053943">
    <property type="entry name" value="RlmKL-like_Mtase_CS"/>
</dbReference>
<dbReference type="InterPro" id="IPR054170">
    <property type="entry name" value="RlmL_1st"/>
</dbReference>
<dbReference type="InterPro" id="IPR029063">
    <property type="entry name" value="SAM-dependent_MTases_sf"/>
</dbReference>
<dbReference type="InterPro" id="IPR004114">
    <property type="entry name" value="THUMP_dom"/>
</dbReference>
<dbReference type="PANTHER" id="PTHR47313">
    <property type="entry name" value="RIBOSOMAL RNA LARGE SUBUNIT METHYLTRANSFERASE K/L"/>
    <property type="match status" value="1"/>
</dbReference>
<dbReference type="PANTHER" id="PTHR47313:SF1">
    <property type="entry name" value="RIBOSOMAL RNA LARGE SUBUNIT METHYLTRANSFERASE K_L"/>
    <property type="match status" value="1"/>
</dbReference>
<dbReference type="Pfam" id="PF22020">
    <property type="entry name" value="RlmL_1st"/>
    <property type="match status" value="1"/>
</dbReference>
<dbReference type="Pfam" id="PF02926">
    <property type="entry name" value="THUMP"/>
    <property type="match status" value="1"/>
</dbReference>
<dbReference type="Pfam" id="PF01170">
    <property type="entry name" value="UPF0020"/>
    <property type="match status" value="1"/>
</dbReference>
<dbReference type="PRINTS" id="PR00507">
    <property type="entry name" value="N12N6MTFRASE"/>
</dbReference>
<dbReference type="SMART" id="SM00981">
    <property type="entry name" value="THUMP"/>
    <property type="match status" value="1"/>
</dbReference>
<dbReference type="SUPFAM" id="SSF53335">
    <property type="entry name" value="S-adenosyl-L-methionine-dependent methyltransferases"/>
    <property type="match status" value="1"/>
</dbReference>
<dbReference type="PROSITE" id="PS00092">
    <property type="entry name" value="N6_MTASE"/>
    <property type="match status" value="1"/>
</dbReference>
<dbReference type="PROSITE" id="PS51165">
    <property type="entry name" value="THUMP"/>
    <property type="match status" value="1"/>
</dbReference>
<dbReference type="PROSITE" id="PS01261">
    <property type="entry name" value="UPF0020"/>
    <property type="match status" value="1"/>
</dbReference>
<gene>
    <name type="ordered locus">slr0064</name>
</gene>
<reference key="1">
    <citation type="journal article" date="1995" name="DNA Res.">
        <title>Sequence analysis of the genome of the unicellular cyanobacterium Synechocystis sp. strain PCC6803. I. Sequence features in the 1 Mb region from map positions 64% to 92% of the genome.</title>
        <authorList>
            <person name="Kaneko T."/>
            <person name="Tanaka A."/>
            <person name="Sato S."/>
            <person name="Kotani H."/>
            <person name="Sazuka T."/>
            <person name="Miyajima N."/>
            <person name="Sugiura M."/>
            <person name="Tabata S."/>
        </authorList>
    </citation>
    <scope>NUCLEOTIDE SEQUENCE [LARGE SCALE GENOMIC DNA]</scope>
    <source>
        <strain>ATCC 27184 / PCC 6803 / N-1</strain>
    </source>
</reference>
<reference key="2">
    <citation type="journal article" date="1996" name="DNA Res.">
        <title>Sequence analysis of the genome of the unicellular cyanobacterium Synechocystis sp. strain PCC6803. II. Sequence determination of the entire genome and assignment of potential protein-coding regions.</title>
        <authorList>
            <person name="Kaneko T."/>
            <person name="Sato S."/>
            <person name="Kotani H."/>
            <person name="Tanaka A."/>
            <person name="Asamizu E."/>
            <person name="Nakamura Y."/>
            <person name="Miyajima N."/>
            <person name="Hirosawa M."/>
            <person name="Sugiura M."/>
            <person name="Sasamoto S."/>
            <person name="Kimura T."/>
            <person name="Hosouchi T."/>
            <person name="Matsuno A."/>
            <person name="Muraki A."/>
            <person name="Nakazaki N."/>
            <person name="Naruo K."/>
            <person name="Okumura S."/>
            <person name="Shimpo S."/>
            <person name="Takeuchi C."/>
            <person name="Wada T."/>
            <person name="Watanabe A."/>
            <person name="Yamada M."/>
            <person name="Yasuda M."/>
            <person name="Tabata S."/>
        </authorList>
    </citation>
    <scope>NUCLEOTIDE SEQUENCE [LARGE SCALE GENOMIC DNA]</scope>
    <source>
        <strain>ATCC 27184 / PCC 6803 / Kazusa</strain>
    </source>
</reference>
<feature type="chain" id="PRO_0000140477" description="Putative RNA methyltransferase slr0064">
    <location>
        <begin position="1"/>
        <end position="384"/>
    </location>
</feature>
<feature type="domain" description="THUMP" evidence="1">
    <location>
        <begin position="53"/>
        <end position="164"/>
    </location>
</feature>
<name>Y064_SYNY3</name>
<evidence type="ECO:0000255" key="1">
    <source>
        <dbReference type="PROSITE-ProRule" id="PRU00529"/>
    </source>
</evidence>
<evidence type="ECO:0000305" key="2"/>
<keyword id="KW-0489">Methyltransferase</keyword>
<keyword id="KW-1185">Reference proteome</keyword>
<keyword id="KW-0808">Transferase</keyword>
<comment type="similarity">
    <text evidence="2">Belongs to the methyltransferase superfamily.</text>
</comment>
<proteinExistence type="inferred from homology"/>